<accession>P01537</accession>
<feature type="chain" id="PRO_0000221482" description="Viscotoxin-1-PS" evidence="2">
    <location>
        <begin position="1"/>
        <end position="46"/>
    </location>
</feature>
<feature type="disulfide bond" evidence="1">
    <location>
        <begin position="3"/>
        <end position="40"/>
    </location>
</feature>
<feature type="disulfide bond" evidence="1">
    <location>
        <begin position="4"/>
        <end position="32"/>
    </location>
</feature>
<feature type="disulfide bond" evidence="1">
    <location>
        <begin position="16"/>
        <end position="26"/>
    </location>
</feature>
<organism>
    <name type="scientific">Viscum album</name>
    <name type="common">European mistletoe</name>
    <dbReference type="NCBI Taxonomy" id="3972"/>
    <lineage>
        <taxon>Eukaryota</taxon>
        <taxon>Viridiplantae</taxon>
        <taxon>Streptophyta</taxon>
        <taxon>Embryophyta</taxon>
        <taxon>Tracheophyta</taxon>
        <taxon>Spermatophyta</taxon>
        <taxon>Magnoliopsida</taxon>
        <taxon>eudicotyledons</taxon>
        <taxon>Gunneridae</taxon>
        <taxon>Pentapetalae</taxon>
        <taxon>Santalales</taxon>
        <taxon>Viscaceae</taxon>
        <taxon>Viscum</taxon>
    </lineage>
</organism>
<gene>
    <name type="primary">THI2.4</name>
</gene>
<evidence type="ECO:0000250" key="1">
    <source>
        <dbReference type="UniProtKB" id="P32880"/>
    </source>
</evidence>
<evidence type="ECO:0000269" key="2">
    <source>
    </source>
</evidence>
<evidence type="ECO:0000303" key="3">
    <source>
    </source>
</evidence>
<evidence type="ECO:0000305" key="4"/>
<comment type="function">
    <text>Thionins are small plant proteins which are toxic to animal cells. They seem to exert their toxic effect at the level of the cell membrane. Their precise function is not known.</text>
</comment>
<comment type="subcellular location">
    <subcellularLocation>
        <location evidence="2">Secreted</location>
    </subcellularLocation>
</comment>
<comment type="similarity">
    <text evidence="4">Belongs to the plant thionin (TC 1.C.44) family.</text>
</comment>
<protein>
    <recommendedName>
        <fullName evidence="3">Viscotoxin-1-PS</fullName>
    </recommendedName>
</protein>
<reference key="1">
    <citation type="journal article" date="1974" name="Acta Pharm. Suec.">
        <title>Isolation and characterization of viscotoxin 1-Ps from Viscum album L. ssp. austriacum (Wiesb.) vollmann, growing on Pinus silvestris.</title>
        <authorList>
            <person name="Samuelsson G."/>
            <person name="Jayawardene A.L."/>
        </authorList>
    </citation>
    <scope>PROTEIN SEQUENCE</scope>
    <scope>SUBCELLULAR LOCATION</scope>
    <source>
        <strain>Subsp. austriacum</strain>
    </source>
</reference>
<name>THN1_VISAL</name>
<proteinExistence type="evidence at protein level"/>
<sequence length="46" mass="4904">KSCCPBTTGRBIYBTCRFGGGSRZVCARISGCKIISASTCPSYPBK</sequence>
<keyword id="KW-0903">Direct protein sequencing</keyword>
<keyword id="KW-1015">Disulfide bond</keyword>
<keyword id="KW-0611">Plant defense</keyword>
<keyword id="KW-0964">Secreted</keyword>
<keyword id="KW-0800">Toxin</keyword>
<dbReference type="PIR" id="A01800">
    <property type="entry name" value="VTVA1P"/>
</dbReference>
<dbReference type="GO" id="GO:0005576">
    <property type="term" value="C:extracellular region"/>
    <property type="evidence" value="ECO:0007669"/>
    <property type="project" value="UniProtKB-SubCell"/>
</dbReference>
<dbReference type="GO" id="GO:0090729">
    <property type="term" value="F:toxin activity"/>
    <property type="evidence" value="ECO:0007669"/>
    <property type="project" value="UniProtKB-KW"/>
</dbReference>
<dbReference type="GO" id="GO:0006952">
    <property type="term" value="P:defense response"/>
    <property type="evidence" value="ECO:0007669"/>
    <property type="project" value="UniProtKB-KW"/>
</dbReference>
<dbReference type="FunFam" id="3.30.1350.10:FF:000001">
    <property type="entry name" value="Hellethionin-D"/>
    <property type="match status" value="1"/>
</dbReference>
<dbReference type="Gene3D" id="3.30.1350.10">
    <property type="entry name" value="Thionin-like"/>
    <property type="match status" value="1"/>
</dbReference>
<dbReference type="InterPro" id="IPR001010">
    <property type="entry name" value="Thionin"/>
</dbReference>
<dbReference type="InterPro" id="IPR036391">
    <property type="entry name" value="Thionin-like_sf"/>
</dbReference>
<dbReference type="PANTHER" id="PTHR33920">
    <property type="entry name" value="THIONIN-2.1-RELATED"/>
    <property type="match status" value="1"/>
</dbReference>
<dbReference type="PANTHER" id="PTHR33920:SF2">
    <property type="entry name" value="THIONIN-2.1-RELATED"/>
    <property type="match status" value="1"/>
</dbReference>
<dbReference type="Pfam" id="PF00321">
    <property type="entry name" value="Thionin"/>
    <property type="match status" value="1"/>
</dbReference>
<dbReference type="PRINTS" id="PR00287">
    <property type="entry name" value="THIONIN"/>
</dbReference>
<dbReference type="SUPFAM" id="SSF57429">
    <property type="entry name" value="Crambin-like"/>
    <property type="match status" value="1"/>
</dbReference>
<dbReference type="PROSITE" id="PS00271">
    <property type="entry name" value="THIONIN"/>
    <property type="match status" value="1"/>
</dbReference>